<organism>
    <name type="scientific">Streptococcus pneumoniae (strain ATCC BAA-255 / R6)</name>
    <dbReference type="NCBI Taxonomy" id="171101"/>
    <lineage>
        <taxon>Bacteria</taxon>
        <taxon>Bacillati</taxon>
        <taxon>Bacillota</taxon>
        <taxon>Bacilli</taxon>
        <taxon>Lactobacillales</taxon>
        <taxon>Streptococcaceae</taxon>
        <taxon>Streptococcus</taxon>
    </lineage>
</organism>
<accession>Q8DN46</accession>
<gene>
    <name evidence="2" type="primary">hisS</name>
    <name type="ordered locus">spr1931</name>
</gene>
<dbReference type="EC" id="6.1.1.21" evidence="2"/>
<dbReference type="EMBL" id="AE007317">
    <property type="protein sequence ID" value="AAL00733.1"/>
    <property type="molecule type" value="Genomic_DNA"/>
</dbReference>
<dbReference type="PIR" id="H98112">
    <property type="entry name" value="H98112"/>
</dbReference>
<dbReference type="RefSeq" id="NP_359522.1">
    <property type="nucleotide sequence ID" value="NC_003098.1"/>
</dbReference>
<dbReference type="RefSeq" id="WP_000775873.1">
    <property type="nucleotide sequence ID" value="NC_003098.1"/>
</dbReference>
<dbReference type="SMR" id="Q8DN46"/>
<dbReference type="STRING" id="171101.spr1931"/>
<dbReference type="KEGG" id="spr:spr1931"/>
<dbReference type="PATRIC" id="fig|171101.6.peg.2084"/>
<dbReference type="eggNOG" id="COG0124">
    <property type="taxonomic scope" value="Bacteria"/>
</dbReference>
<dbReference type="HOGENOM" id="CLU_025113_1_1_9"/>
<dbReference type="Proteomes" id="UP000000586">
    <property type="component" value="Chromosome"/>
</dbReference>
<dbReference type="GO" id="GO:0005737">
    <property type="term" value="C:cytoplasm"/>
    <property type="evidence" value="ECO:0007669"/>
    <property type="project" value="UniProtKB-SubCell"/>
</dbReference>
<dbReference type="GO" id="GO:0005524">
    <property type="term" value="F:ATP binding"/>
    <property type="evidence" value="ECO:0007669"/>
    <property type="project" value="UniProtKB-UniRule"/>
</dbReference>
<dbReference type="GO" id="GO:0140096">
    <property type="term" value="F:catalytic activity, acting on a protein"/>
    <property type="evidence" value="ECO:0007669"/>
    <property type="project" value="UniProtKB-ARBA"/>
</dbReference>
<dbReference type="GO" id="GO:0004821">
    <property type="term" value="F:histidine-tRNA ligase activity"/>
    <property type="evidence" value="ECO:0000318"/>
    <property type="project" value="GO_Central"/>
</dbReference>
<dbReference type="GO" id="GO:0016740">
    <property type="term" value="F:transferase activity"/>
    <property type="evidence" value="ECO:0007669"/>
    <property type="project" value="UniProtKB-ARBA"/>
</dbReference>
<dbReference type="GO" id="GO:0006427">
    <property type="term" value="P:histidyl-tRNA aminoacylation"/>
    <property type="evidence" value="ECO:0000318"/>
    <property type="project" value="GO_Central"/>
</dbReference>
<dbReference type="CDD" id="cd00773">
    <property type="entry name" value="HisRS-like_core"/>
    <property type="match status" value="1"/>
</dbReference>
<dbReference type="CDD" id="cd00859">
    <property type="entry name" value="HisRS_anticodon"/>
    <property type="match status" value="1"/>
</dbReference>
<dbReference type="FunFam" id="3.30.930.10:FF:000005">
    <property type="entry name" value="Histidine--tRNA ligase"/>
    <property type="match status" value="1"/>
</dbReference>
<dbReference type="FunFam" id="3.40.50.800:FF:000022">
    <property type="entry name" value="Histidine--tRNA ligase"/>
    <property type="match status" value="1"/>
</dbReference>
<dbReference type="Gene3D" id="3.40.50.800">
    <property type="entry name" value="Anticodon-binding domain"/>
    <property type="match status" value="1"/>
</dbReference>
<dbReference type="Gene3D" id="3.30.930.10">
    <property type="entry name" value="Bira Bifunctional Protein, Domain 2"/>
    <property type="match status" value="1"/>
</dbReference>
<dbReference type="HAMAP" id="MF_00127">
    <property type="entry name" value="His_tRNA_synth"/>
    <property type="match status" value="1"/>
</dbReference>
<dbReference type="InterPro" id="IPR006195">
    <property type="entry name" value="aa-tRNA-synth_II"/>
</dbReference>
<dbReference type="InterPro" id="IPR045864">
    <property type="entry name" value="aa-tRNA-synth_II/BPL/LPL"/>
</dbReference>
<dbReference type="InterPro" id="IPR004154">
    <property type="entry name" value="Anticodon-bd"/>
</dbReference>
<dbReference type="InterPro" id="IPR036621">
    <property type="entry name" value="Anticodon-bd_dom_sf"/>
</dbReference>
<dbReference type="InterPro" id="IPR015807">
    <property type="entry name" value="His-tRNA-ligase"/>
</dbReference>
<dbReference type="InterPro" id="IPR041715">
    <property type="entry name" value="HisRS-like_core"/>
</dbReference>
<dbReference type="InterPro" id="IPR004516">
    <property type="entry name" value="HisRS/HisZ"/>
</dbReference>
<dbReference type="InterPro" id="IPR033656">
    <property type="entry name" value="HisRS_anticodon"/>
</dbReference>
<dbReference type="NCBIfam" id="TIGR00442">
    <property type="entry name" value="hisS"/>
    <property type="match status" value="1"/>
</dbReference>
<dbReference type="PANTHER" id="PTHR43707:SF1">
    <property type="entry name" value="HISTIDINE--TRNA LIGASE, MITOCHONDRIAL-RELATED"/>
    <property type="match status" value="1"/>
</dbReference>
<dbReference type="PANTHER" id="PTHR43707">
    <property type="entry name" value="HISTIDYL-TRNA SYNTHETASE"/>
    <property type="match status" value="1"/>
</dbReference>
<dbReference type="Pfam" id="PF03129">
    <property type="entry name" value="HGTP_anticodon"/>
    <property type="match status" value="1"/>
</dbReference>
<dbReference type="Pfam" id="PF13393">
    <property type="entry name" value="tRNA-synt_His"/>
    <property type="match status" value="1"/>
</dbReference>
<dbReference type="PIRSF" id="PIRSF001549">
    <property type="entry name" value="His-tRNA_synth"/>
    <property type="match status" value="1"/>
</dbReference>
<dbReference type="SUPFAM" id="SSF52954">
    <property type="entry name" value="Class II aaRS ABD-related"/>
    <property type="match status" value="1"/>
</dbReference>
<dbReference type="SUPFAM" id="SSF55681">
    <property type="entry name" value="Class II aaRS and biotin synthetases"/>
    <property type="match status" value="1"/>
</dbReference>
<dbReference type="PROSITE" id="PS50862">
    <property type="entry name" value="AA_TRNA_LIGASE_II"/>
    <property type="match status" value="1"/>
</dbReference>
<reference key="1">
    <citation type="journal article" date="2001" name="J. Bacteriol.">
        <title>Genome of the bacterium Streptococcus pneumoniae strain R6.</title>
        <authorList>
            <person name="Hoskins J."/>
            <person name="Alborn W.E. Jr."/>
            <person name="Arnold J."/>
            <person name="Blaszczak L.C."/>
            <person name="Burgett S."/>
            <person name="DeHoff B.S."/>
            <person name="Estrem S.T."/>
            <person name="Fritz L."/>
            <person name="Fu D.-J."/>
            <person name="Fuller W."/>
            <person name="Geringer C."/>
            <person name="Gilmour R."/>
            <person name="Glass J.S."/>
            <person name="Khoja H."/>
            <person name="Kraft A.R."/>
            <person name="Lagace R.E."/>
            <person name="LeBlanc D.J."/>
            <person name="Lee L.N."/>
            <person name="Lefkowitz E.J."/>
            <person name="Lu J."/>
            <person name="Matsushima P."/>
            <person name="McAhren S.M."/>
            <person name="McHenney M."/>
            <person name="McLeaster K."/>
            <person name="Mundy C.W."/>
            <person name="Nicas T.I."/>
            <person name="Norris F.H."/>
            <person name="O'Gara M."/>
            <person name="Peery R.B."/>
            <person name="Robertson G.T."/>
            <person name="Rockey P."/>
            <person name="Sun P.-M."/>
            <person name="Winkler M.E."/>
            <person name="Yang Y."/>
            <person name="Young-Bellido M."/>
            <person name="Zhao G."/>
            <person name="Zook C.A."/>
            <person name="Baltz R.H."/>
            <person name="Jaskunas S.R."/>
            <person name="Rosteck P.R. Jr."/>
            <person name="Skatrud P.L."/>
            <person name="Glass J.I."/>
        </authorList>
    </citation>
    <scope>NUCLEOTIDE SEQUENCE [LARGE SCALE GENOMIC DNA]</scope>
    <source>
        <strain>ATCC BAA-255 / R6</strain>
    </source>
</reference>
<sequence>MKLQKPKGTQDILPAESAKWQYVEGFAREIFKRYNYAEVRTPIFEHYEVISRSVGDTTDIVTKEMYDFYDKGDRHITLRPEGTAPVVRSYVENKLFAPEVQKPSKFYYMGPMFRYERPQAGRLRQFHQIGVECFGSSNPATDVETIAMAAHFLKEIGIQGVKLHLNTLGNPESRAAYRQALIDYLTPLKETLSKDSQRRLEENPLRVLDSKEKEDKVAVENAPSILDFLDEESQTHFDAVRQMLENLGVDYIIDTNMVRGLDYYNHTIFEFITEIEGNDLTVCAGGRYDGLVAYFGGPETAGFGFGLGVERLLLILEKQGVALPIENALDVYIAVLGDGANVKALELVQALRQQGFKAERDYLNRKLKAQFKSADVFAAKTLITLGESEVESGQVTVKNNQTREEVQVSLETISQNFSEIFEKLGFYTQ</sequence>
<keyword id="KW-0030">Aminoacyl-tRNA synthetase</keyword>
<keyword id="KW-0067">ATP-binding</keyword>
<keyword id="KW-0963">Cytoplasm</keyword>
<keyword id="KW-0436">Ligase</keyword>
<keyword id="KW-0547">Nucleotide-binding</keyword>
<keyword id="KW-0648">Protein biosynthesis</keyword>
<keyword id="KW-1185">Reference proteome</keyword>
<evidence type="ECO:0000250" key="1"/>
<evidence type="ECO:0000255" key="2">
    <source>
        <dbReference type="HAMAP-Rule" id="MF_00127"/>
    </source>
</evidence>
<comment type="catalytic activity">
    <reaction evidence="2">
        <text>tRNA(His) + L-histidine + ATP = L-histidyl-tRNA(His) + AMP + diphosphate + H(+)</text>
        <dbReference type="Rhea" id="RHEA:17313"/>
        <dbReference type="Rhea" id="RHEA-COMP:9665"/>
        <dbReference type="Rhea" id="RHEA-COMP:9689"/>
        <dbReference type="ChEBI" id="CHEBI:15378"/>
        <dbReference type="ChEBI" id="CHEBI:30616"/>
        <dbReference type="ChEBI" id="CHEBI:33019"/>
        <dbReference type="ChEBI" id="CHEBI:57595"/>
        <dbReference type="ChEBI" id="CHEBI:78442"/>
        <dbReference type="ChEBI" id="CHEBI:78527"/>
        <dbReference type="ChEBI" id="CHEBI:456215"/>
        <dbReference type="EC" id="6.1.1.21"/>
    </reaction>
</comment>
<comment type="subunit">
    <text evidence="2">Homodimer.</text>
</comment>
<comment type="subcellular location">
    <subcellularLocation>
        <location evidence="2">Cytoplasm</location>
    </subcellularLocation>
</comment>
<comment type="similarity">
    <text evidence="2">Belongs to the class-II aminoacyl-tRNA synthetase family.</text>
</comment>
<feature type="initiator methionine" description="Removed" evidence="1">
    <location>
        <position position="1"/>
    </location>
</feature>
<feature type="chain" id="PRO_0000136265" description="Histidine--tRNA ligase">
    <location>
        <begin position="2"/>
        <end position="429"/>
    </location>
</feature>
<name>SYH_STRR6</name>
<protein>
    <recommendedName>
        <fullName evidence="2">Histidine--tRNA ligase</fullName>
        <ecNumber evidence="2">6.1.1.21</ecNumber>
    </recommendedName>
    <alternativeName>
        <fullName evidence="2">Histidyl-tRNA synthetase</fullName>
        <shortName evidence="2">HisRS</shortName>
    </alternativeName>
</protein>
<proteinExistence type="inferred from homology"/>